<comment type="function">
    <text evidence="1">Following virus entry into host cell, provides nuclear import of HDV RNPs thanks to its nuclear localization signal. Needs co-infection with hepatitis B virus to provide surface proteins, otherwise there is no packaging or budding. Packages the HDV ribonucleoprotein in hepatitis B virus empty particles. Interacts with both HDV genomic RNA and cytoplasmic tail of HBsAg. May inhibit viral RNA replication (By similarity).</text>
</comment>
<comment type="subunit">
    <text evidence="1">Homodimer. Homooctamer. Interacts with HBV HBsAg. May interact with clathrin to induce virion budding (By similarity).</text>
</comment>
<comment type="subcellular location">
    <subcellularLocation>
        <location>Virion</location>
    </subcellularLocation>
    <subcellularLocation>
        <location>Host nucleus</location>
        <location>Host nucleolus</location>
    </subcellularLocation>
    <text evidence="1">isoprenylated in the cytoplasm, and translocates in the nucleus possibly after phosphorylation. Translocates after to nuclear speckle, then to the ER membrane where interaction with Hepatitis B virus antigene takes place (By similarity).</text>
</comment>
<comment type="PTM">
    <text evidence="1">Prenylated by host farnesyl-transferase in the cytoplasm prior to nucleus translocation.</text>
</comment>
<comment type="PTM">
    <text evidence="1">Phosphorylated at serines by host CK2 and other kinases. phosphorylation does not seem to be important for its function (By similarity).</text>
</comment>
<comment type="RNA editing">
    <location>
        <position position="196" evidence="7 8"/>
    </location>
    <text evidence="1">Partially edited. RNA editing at this position occurs on the antigenomic strand and consists of a conversion of A to G catalyzed by the cellular enzyme ADAR1. The unedited RNA version gives rise to the small delta antigen (AC Q81842), which ends with a nonsense codon at position 196. In the edited version, this amber codon is modified to a tryptophan codon and gives rise to the large delta antigen protein. S-HDAg suppresses editing of non-replicating antigenomic RNA, thereby regulating the extent of editing (By similarity).</text>
</comment>
<comment type="miscellaneous">
    <text>This strain belongs to the genotype III found only among cases in South America and which causes a more severe form of infection than genotypes I and II.</text>
</comment>
<comment type="similarity">
    <text evidence="9">Belongs to the hepatitis delta antigen family.</text>
</comment>
<name>LHDAG_HDVP1</name>
<protein>
    <recommendedName>
        <fullName>Large delta antigen</fullName>
        <shortName>L-HDAg</shortName>
    </recommendedName>
    <alternativeName>
        <fullName>p27</fullName>
    </alternativeName>
</protein>
<accession>P0C6M3</accession>
<feature type="chain" id="PRO_0000038142" description="Large delta antigen">
    <location>
        <begin position="1"/>
        <end position="211"/>
    </location>
</feature>
<feature type="propeptide" id="PRO_0000396795" description="Removed in mature form" evidence="9">
    <location>
        <begin position="212"/>
        <end position="214"/>
    </location>
</feature>
<feature type="domain" description="HDAg" evidence="5">
    <location>
        <begin position="20"/>
        <end position="194"/>
    </location>
</feature>
<feature type="region of interest" description="Dimerization" evidence="4">
    <location>
        <begin position="12"/>
        <end position="59"/>
    </location>
</feature>
<feature type="region of interest" description="Disordered" evidence="6">
    <location>
        <begin position="58"/>
        <end position="185"/>
    </location>
</feature>
<feature type="region of interest" description="RNA-binding" evidence="5">
    <location>
        <begin position="96"/>
        <end position="106"/>
    </location>
</feature>
<feature type="region of interest" description="RNAPII-binding" evidence="5">
    <location>
        <begin position="129"/>
        <end position="194"/>
    </location>
</feature>
<feature type="region of interest" description="RNA-binding" evidence="5">
    <location>
        <begin position="135"/>
        <end position="145"/>
    </location>
</feature>
<feature type="short sequence motif" description="Nuclear localization signal" evidence="3">
    <location>
        <begin position="65"/>
        <end position="74"/>
    </location>
</feature>
<feature type="compositionally biased region" description="Basic and acidic residues" evidence="6">
    <location>
        <begin position="128"/>
        <end position="143"/>
    </location>
</feature>
<feature type="modified residue" description="Phosphoserine; by host" evidence="3">
    <location>
        <position position="2"/>
    </location>
</feature>
<feature type="modified residue" description="Omega-N-methylated arginine; by host" evidence="2">
    <location>
        <position position="13"/>
    </location>
</feature>
<feature type="modified residue" description="N6-acetyllysine; by host" evidence="2">
    <location>
        <position position="71"/>
    </location>
</feature>
<feature type="modified residue" description="Phosphoserine; by host" evidence="3">
    <location>
        <position position="122"/>
    </location>
</feature>
<feature type="modified residue" description="Phosphoserine; by host" evidence="3">
    <location>
        <position position="176"/>
    </location>
</feature>
<feature type="modified residue" description="Cysteine methyl ester; by host" evidence="9">
    <location>
        <position position="211"/>
    </location>
</feature>
<feature type="lipid moiety-binding region" description="S-farnesyl cysteine; by host" evidence="10">
    <location>
        <position position="211"/>
    </location>
</feature>
<organism>
    <name type="scientific">Hepatitis delta virus genotype III (isolate Peru-1)</name>
    <name type="common">HDV</name>
    <dbReference type="NCBI Taxonomy" id="261996"/>
    <lineage>
        <taxon>Viruses</taxon>
        <taxon>Ribozyviria</taxon>
        <taxon>Kolmioviridae</taxon>
        <taxon>Deltavirus</taxon>
        <taxon>Hepatitis delta virus</taxon>
    </lineage>
</organism>
<organismHost>
    <name type="scientific">Homo sapiens</name>
    <name type="common">Human</name>
    <dbReference type="NCBI Taxonomy" id="9606"/>
</organismHost>
<evidence type="ECO:0000250" key="1"/>
<evidence type="ECO:0000250" key="2">
    <source>
        <dbReference type="UniProtKB" id="P0C6L3"/>
    </source>
</evidence>
<evidence type="ECO:0000250" key="3">
    <source>
        <dbReference type="UniProtKB" id="P29996"/>
    </source>
</evidence>
<evidence type="ECO:0000255" key="4"/>
<evidence type="ECO:0000255" key="5">
    <source>
        <dbReference type="PROSITE-ProRule" id="PRU01183"/>
    </source>
</evidence>
<evidence type="ECO:0000256" key="6">
    <source>
        <dbReference type="SAM" id="MobiDB-lite"/>
    </source>
</evidence>
<evidence type="ECO:0000269" key="7">
    <source>
    </source>
</evidence>
<evidence type="ECO:0000269" key="8">
    <source>
    </source>
</evidence>
<evidence type="ECO:0000305" key="9"/>
<evidence type="ECO:0000305" key="10">
    <source>
    </source>
</evidence>
<sequence length="214" mass="24452">MSQTVARLTSKEREEILEQWVEERKNRRKLEKDLRRANKKIKKLEDENPWLGNVVGLLRRKKDEDGAPPAKRPRQETMEVDSGPGRKPKARGFTDQERRDHRRRKALENKKKQLAGGGKHLSQEEEEELRRLARDDDERERRTAGPRPGGVNPMDGPPRGAPGGGFVPSLQGVPESPFSRTGEGIDIRGTQQFPWYGFTPPPPGYYWVPGCTQQ</sequence>
<dbReference type="EMBL" id="L22063">
    <property type="protein sequence ID" value="AAB02595.1"/>
    <property type="molecule type" value="Genomic_RNA"/>
</dbReference>
<dbReference type="SMR" id="P0C6M3"/>
<dbReference type="Proteomes" id="UP000008110">
    <property type="component" value="Segment"/>
</dbReference>
<dbReference type="GO" id="GO:0043657">
    <property type="term" value="C:host cell"/>
    <property type="evidence" value="ECO:0007669"/>
    <property type="project" value="GOC"/>
</dbReference>
<dbReference type="GO" id="GO:0044196">
    <property type="term" value="C:host cell nucleolus"/>
    <property type="evidence" value="ECO:0007669"/>
    <property type="project" value="UniProtKB-SubCell"/>
</dbReference>
<dbReference type="GO" id="GO:0044423">
    <property type="term" value="C:virion component"/>
    <property type="evidence" value="ECO:0007669"/>
    <property type="project" value="UniProtKB-KW"/>
</dbReference>
<dbReference type="GO" id="GO:0003723">
    <property type="term" value="F:RNA binding"/>
    <property type="evidence" value="ECO:0007669"/>
    <property type="project" value="UniProtKB-KW"/>
</dbReference>
<dbReference type="GO" id="GO:0046718">
    <property type="term" value="P:symbiont entry into host cell"/>
    <property type="evidence" value="ECO:0007669"/>
    <property type="project" value="UniProtKB-KW"/>
</dbReference>
<dbReference type="GO" id="GO:0075732">
    <property type="term" value="P:viral penetration into host nucleus"/>
    <property type="evidence" value="ECO:0007669"/>
    <property type="project" value="UniProtKB-KW"/>
</dbReference>
<dbReference type="Gene3D" id="4.10.220.40">
    <property type="entry name" value="Delta antigen, N-terminal"/>
    <property type="match status" value="1"/>
</dbReference>
<dbReference type="InterPro" id="IPR027403">
    <property type="entry name" value="Delta_antigen_N"/>
</dbReference>
<dbReference type="InterPro" id="IPR037517">
    <property type="entry name" value="HDAG_dom"/>
</dbReference>
<dbReference type="InterPro" id="IPR002506">
    <property type="entry name" value="HDV_ag"/>
</dbReference>
<dbReference type="Pfam" id="PF01517">
    <property type="entry name" value="HDV_ag"/>
    <property type="match status" value="1"/>
</dbReference>
<dbReference type="SUPFAM" id="SSF58108">
    <property type="entry name" value="Oligomerization domain of hepatitis delta antigen"/>
    <property type="match status" value="1"/>
</dbReference>
<dbReference type="PROSITE" id="PS51838">
    <property type="entry name" value="HDAG"/>
    <property type="match status" value="1"/>
</dbReference>
<keyword id="KW-0007">Acetylation</keyword>
<keyword id="KW-1048">Host nucleus</keyword>
<keyword id="KW-0449">Lipoprotein</keyword>
<keyword id="KW-0488">Methylation</keyword>
<keyword id="KW-0597">Phosphoprotein</keyword>
<keyword id="KW-0636">Prenylation</keyword>
<keyword id="KW-0691">RNA editing</keyword>
<keyword id="KW-0694">RNA-binding</keyword>
<keyword id="KW-1163">Viral penetration into host nucleus</keyword>
<keyword id="KW-0946">Virion</keyword>
<keyword id="KW-1160">Virus entry into host cell</keyword>
<proteinExistence type="evidence at protein level"/>
<reference key="1">
    <citation type="journal article" date="1993" name="Proc. Natl. Acad. Sci. U.S.A.">
        <title>A genotype of hepatitis D virus that occurs in northern South America.</title>
        <authorList>
            <person name="Casey J.L."/>
            <person name="Brown T.L."/>
            <person name="Colan E.J."/>
            <person name="Wignall F.S."/>
            <person name="Gerin J.L."/>
        </authorList>
    </citation>
    <scope>NUCLEOTIDE SEQUENCE [GENOMIC RNA]</scope>
    <scope>RNA EDITING</scope>
</reference>
<reference key="2">
    <citation type="journal article" date="2003" name="J. Virol.">
        <title>Differential inhibition of RNA editing in hepatitis delta virus genotype III by the short and long forms of hepatitis delta antigen.</title>
        <authorList>
            <person name="Cheng Q."/>
            <person name="Jayan G.C."/>
            <person name="Casey J.L."/>
        </authorList>
    </citation>
    <scope>RNA EDITING</scope>
</reference>
<reference key="3">
    <citation type="journal article" date="2002" name="J. Virol.">
        <title>A prenylation inhibitor prevents production of infectious hepatitis delta virus particles.</title>
        <authorList>
            <person name="Bordier B.B."/>
            <person name="Marion P.L."/>
            <person name="Ohashi K."/>
            <person name="Kay M.A."/>
            <person name="Greenberg H.B."/>
            <person name="Casey J.L."/>
            <person name="Glenn J.S."/>
        </authorList>
    </citation>
    <scope>ISOPRENYLATION AT CYS-211</scope>
    <scope>ANTIVIRAL AGENTS</scope>
</reference>
<reference key="4">
    <citation type="journal article" date="2005" name="Acta Virol.">
        <title>Hepatitis D.</title>
        <authorList>
            <person name="Husa P."/>
            <person name="Linhartova A."/>
            <person name="Nemecek V."/>
            <person name="Husova L."/>
        </authorList>
    </citation>
    <scope>REVIEW</scope>
</reference>
<reference key="5">
    <citation type="journal article" date="2006" name="Curr. Top. Microbiol. Immunol.">
        <title>Post-translational modification of delta antigen of hepatitis D virus.</title>
        <authorList>
            <person name="Huang W.H."/>
            <person name="Chen C.W."/>
            <person name="Wu H.L."/>
            <person name="Chen P.J."/>
        </authorList>
    </citation>
    <scope>REVIEW</scope>
</reference>